<evidence type="ECO:0000255" key="1">
    <source>
        <dbReference type="HAMAP-Rule" id="MF_00251"/>
    </source>
</evidence>
<evidence type="ECO:0000305" key="2"/>
<feature type="chain" id="PRO_0000344675" description="Large ribosomal subunit protein bL36B">
    <location>
        <begin position="1"/>
        <end position="46"/>
    </location>
</feature>
<protein>
    <recommendedName>
        <fullName evidence="1">Large ribosomal subunit protein bL36B</fullName>
    </recommendedName>
    <alternativeName>
        <fullName evidence="2">50S ribosomal protein L36 2</fullName>
    </alternativeName>
</protein>
<comment type="similarity">
    <text evidence="1">Belongs to the bacterial ribosomal protein bL36 family.</text>
</comment>
<comment type="sequence caution" evidence="2">
    <conflict type="erroneous initiation">
        <sequence resource="EMBL-CDS" id="ABE05814"/>
    </conflict>
    <text>Extended N-terminus.</text>
</comment>
<sequence length="46" mass="5467">MKVLNSLRTAKERHPDCQIVKRKGRLYVICKSNPRFKAVQGRKKKR</sequence>
<keyword id="KW-0687">Ribonucleoprotein</keyword>
<keyword id="KW-0689">Ribosomal protein</keyword>
<proteinExistence type="inferred from homology"/>
<accession>Q1RFQ0</accession>
<name>RL362_ECOUT</name>
<reference key="1">
    <citation type="journal article" date="2006" name="Proc. Natl. Acad. Sci. U.S.A.">
        <title>Identification of genes subject to positive selection in uropathogenic strains of Escherichia coli: a comparative genomics approach.</title>
        <authorList>
            <person name="Chen S.L."/>
            <person name="Hung C.-S."/>
            <person name="Xu J."/>
            <person name="Reigstad C.S."/>
            <person name="Magrini V."/>
            <person name="Sabo A."/>
            <person name="Blasiar D."/>
            <person name="Bieri T."/>
            <person name="Meyer R.R."/>
            <person name="Ozersky P."/>
            <person name="Armstrong J.R."/>
            <person name="Fulton R.S."/>
            <person name="Latreille J.P."/>
            <person name="Spieth J."/>
            <person name="Hooton T.M."/>
            <person name="Mardis E.R."/>
            <person name="Hultgren S.J."/>
            <person name="Gordon J.I."/>
        </authorList>
    </citation>
    <scope>NUCLEOTIDE SEQUENCE [LARGE SCALE GENOMIC DNA]</scope>
    <source>
        <strain>UTI89 / UPEC</strain>
    </source>
</reference>
<dbReference type="EMBL" id="CP000243">
    <property type="protein sequence ID" value="ABE05814.1"/>
    <property type="status" value="ALT_INIT"/>
    <property type="molecule type" value="Genomic_DNA"/>
</dbReference>
<dbReference type="SMR" id="Q1RFQ0"/>
<dbReference type="KEGG" id="eci:UTI89_C0313"/>
<dbReference type="HOGENOM" id="CLU_135723_3_1_6"/>
<dbReference type="Proteomes" id="UP000001952">
    <property type="component" value="Chromosome"/>
</dbReference>
<dbReference type="GO" id="GO:1990904">
    <property type="term" value="C:ribonucleoprotein complex"/>
    <property type="evidence" value="ECO:0007669"/>
    <property type="project" value="UniProtKB-KW"/>
</dbReference>
<dbReference type="GO" id="GO:0005840">
    <property type="term" value="C:ribosome"/>
    <property type="evidence" value="ECO:0007669"/>
    <property type="project" value="UniProtKB-KW"/>
</dbReference>
<dbReference type="GO" id="GO:0003735">
    <property type="term" value="F:structural constituent of ribosome"/>
    <property type="evidence" value="ECO:0007669"/>
    <property type="project" value="InterPro"/>
</dbReference>
<dbReference type="GO" id="GO:0006412">
    <property type="term" value="P:translation"/>
    <property type="evidence" value="ECO:0007669"/>
    <property type="project" value="UniProtKB-UniRule"/>
</dbReference>
<dbReference type="HAMAP" id="MF_00251">
    <property type="entry name" value="Ribosomal_bL36"/>
    <property type="match status" value="1"/>
</dbReference>
<dbReference type="InterPro" id="IPR000473">
    <property type="entry name" value="Ribosomal_bL36"/>
</dbReference>
<dbReference type="InterPro" id="IPR035977">
    <property type="entry name" value="Ribosomal_bL36_sp"/>
</dbReference>
<dbReference type="InterPro" id="IPR047621">
    <property type="entry name" value="Ribosomal_L36_bact"/>
</dbReference>
<dbReference type="NCBIfam" id="NF002021">
    <property type="entry name" value="PRK00831.1"/>
    <property type="match status" value="1"/>
</dbReference>
<dbReference type="NCBIfam" id="TIGR01022">
    <property type="entry name" value="rpmJ_bact"/>
    <property type="match status" value="1"/>
</dbReference>
<dbReference type="PANTHER" id="PTHR47781">
    <property type="entry name" value="50S RIBOSOMAL PROTEIN L36 2"/>
    <property type="match status" value="1"/>
</dbReference>
<dbReference type="PANTHER" id="PTHR47781:SF1">
    <property type="entry name" value="LARGE RIBOSOMAL SUBUNIT PROTEIN BL36B"/>
    <property type="match status" value="1"/>
</dbReference>
<dbReference type="Pfam" id="PF00444">
    <property type="entry name" value="Ribosomal_L36"/>
    <property type="match status" value="1"/>
</dbReference>
<dbReference type="SUPFAM" id="SSF57840">
    <property type="entry name" value="Ribosomal protein L36"/>
    <property type="match status" value="1"/>
</dbReference>
<dbReference type="PROSITE" id="PS00828">
    <property type="entry name" value="RIBOSOMAL_L36"/>
    <property type="match status" value="1"/>
</dbReference>
<gene>
    <name evidence="1" type="primary">rpmJ2</name>
    <name type="ordered locus">UTI89_C0313</name>
</gene>
<organism>
    <name type="scientific">Escherichia coli (strain UTI89 / UPEC)</name>
    <dbReference type="NCBI Taxonomy" id="364106"/>
    <lineage>
        <taxon>Bacteria</taxon>
        <taxon>Pseudomonadati</taxon>
        <taxon>Pseudomonadota</taxon>
        <taxon>Gammaproteobacteria</taxon>
        <taxon>Enterobacterales</taxon>
        <taxon>Enterobacteriaceae</taxon>
        <taxon>Escherichia</taxon>
    </lineage>
</organism>